<accession>Q13YZ8</accession>
<proteinExistence type="inferred from homology"/>
<evidence type="ECO:0000255" key="1">
    <source>
        <dbReference type="HAMAP-Rule" id="MF_00189"/>
    </source>
</evidence>
<sequence>MKFLFDLFPIILFFVAFKIWGIFTATAVAIVATLVQIAWVAFRHRKVDPMLWVSLGVVTVFGGATLVLHNDTFIKWKPTVLYWAFSVALIVSQLAFNKNLIEAMMGKQITLPHAIWGKLNVVWGVFFVLLGLVNLFVAYNYTTDQWVNFKLFGATGCLVVFIVGQSLWLSKYMKEE</sequence>
<dbReference type="EMBL" id="CP000270">
    <property type="protein sequence ID" value="ABE30691.1"/>
    <property type="molecule type" value="Genomic_DNA"/>
</dbReference>
<dbReference type="RefSeq" id="WP_011488315.1">
    <property type="nucleotide sequence ID" value="NC_007951.1"/>
</dbReference>
<dbReference type="STRING" id="266265.Bxe_A2278"/>
<dbReference type="KEGG" id="bxb:DR64_4427"/>
<dbReference type="KEGG" id="bxe:Bxe_A2278"/>
<dbReference type="PATRIC" id="fig|266265.5.peg.2255"/>
<dbReference type="eggNOG" id="COG2917">
    <property type="taxonomic scope" value="Bacteria"/>
</dbReference>
<dbReference type="OrthoDB" id="9788219at2"/>
<dbReference type="Proteomes" id="UP000001817">
    <property type="component" value="Chromosome 1"/>
</dbReference>
<dbReference type="GO" id="GO:0005886">
    <property type="term" value="C:plasma membrane"/>
    <property type="evidence" value="ECO:0007669"/>
    <property type="project" value="UniProtKB-SubCell"/>
</dbReference>
<dbReference type="HAMAP" id="MF_00189">
    <property type="entry name" value="YciB"/>
    <property type="match status" value="1"/>
</dbReference>
<dbReference type="InterPro" id="IPR006008">
    <property type="entry name" value="YciB"/>
</dbReference>
<dbReference type="NCBIfam" id="TIGR00997">
    <property type="entry name" value="ispZ"/>
    <property type="match status" value="1"/>
</dbReference>
<dbReference type="NCBIfam" id="NF001325">
    <property type="entry name" value="PRK00259.1-3"/>
    <property type="match status" value="1"/>
</dbReference>
<dbReference type="PANTHER" id="PTHR36917:SF1">
    <property type="entry name" value="INNER MEMBRANE-SPANNING PROTEIN YCIB"/>
    <property type="match status" value="1"/>
</dbReference>
<dbReference type="PANTHER" id="PTHR36917">
    <property type="entry name" value="INTRACELLULAR SEPTATION PROTEIN A-RELATED"/>
    <property type="match status" value="1"/>
</dbReference>
<dbReference type="Pfam" id="PF04279">
    <property type="entry name" value="IspA"/>
    <property type="match status" value="1"/>
</dbReference>
<gene>
    <name evidence="1" type="primary">yciB</name>
    <name type="ordered locus">Bxeno_A2153</name>
    <name type="ORF">Bxe_A2278</name>
</gene>
<name>YCIB_PARXL</name>
<comment type="function">
    <text evidence="1">Plays a role in cell envelope biogenesis, maintenance of cell envelope integrity and membrane homeostasis.</text>
</comment>
<comment type="subcellular location">
    <subcellularLocation>
        <location evidence="1">Cell inner membrane</location>
        <topology evidence="1">Multi-pass membrane protein</topology>
    </subcellularLocation>
</comment>
<comment type="similarity">
    <text evidence="1">Belongs to the YciB family.</text>
</comment>
<feature type="chain" id="PRO_1000021002" description="Inner membrane-spanning protein YciB">
    <location>
        <begin position="1"/>
        <end position="176"/>
    </location>
</feature>
<feature type="transmembrane region" description="Helical" evidence="1">
    <location>
        <begin position="24"/>
        <end position="44"/>
    </location>
</feature>
<feature type="transmembrane region" description="Helical" evidence="1">
    <location>
        <begin position="49"/>
        <end position="69"/>
    </location>
</feature>
<feature type="transmembrane region" description="Helical" evidence="1">
    <location>
        <begin position="76"/>
        <end position="96"/>
    </location>
</feature>
<feature type="transmembrane region" description="Helical" evidence="1">
    <location>
        <begin position="119"/>
        <end position="139"/>
    </location>
</feature>
<feature type="transmembrane region" description="Helical" evidence="1">
    <location>
        <begin position="149"/>
        <end position="169"/>
    </location>
</feature>
<protein>
    <recommendedName>
        <fullName evidence="1">Inner membrane-spanning protein YciB</fullName>
    </recommendedName>
</protein>
<keyword id="KW-0997">Cell inner membrane</keyword>
<keyword id="KW-1003">Cell membrane</keyword>
<keyword id="KW-0472">Membrane</keyword>
<keyword id="KW-1185">Reference proteome</keyword>
<keyword id="KW-0812">Transmembrane</keyword>
<keyword id="KW-1133">Transmembrane helix</keyword>
<reference key="1">
    <citation type="journal article" date="2006" name="Proc. Natl. Acad. Sci. U.S.A.">
        <title>Burkholderia xenovorans LB400 harbors a multi-replicon, 9.73-Mbp genome shaped for versatility.</title>
        <authorList>
            <person name="Chain P.S.G."/>
            <person name="Denef V.J."/>
            <person name="Konstantinidis K.T."/>
            <person name="Vergez L.M."/>
            <person name="Agullo L."/>
            <person name="Reyes V.L."/>
            <person name="Hauser L."/>
            <person name="Cordova M."/>
            <person name="Gomez L."/>
            <person name="Gonzalez M."/>
            <person name="Land M."/>
            <person name="Lao V."/>
            <person name="Larimer F."/>
            <person name="LiPuma J.J."/>
            <person name="Mahenthiralingam E."/>
            <person name="Malfatti S.A."/>
            <person name="Marx C.J."/>
            <person name="Parnell J.J."/>
            <person name="Ramette A."/>
            <person name="Richardson P."/>
            <person name="Seeger M."/>
            <person name="Smith D."/>
            <person name="Spilker T."/>
            <person name="Sul W.J."/>
            <person name="Tsoi T.V."/>
            <person name="Ulrich L.E."/>
            <person name="Zhulin I.B."/>
            <person name="Tiedje J.M."/>
        </authorList>
    </citation>
    <scope>NUCLEOTIDE SEQUENCE [LARGE SCALE GENOMIC DNA]</scope>
    <source>
        <strain>LB400</strain>
    </source>
</reference>
<organism>
    <name type="scientific">Paraburkholderia xenovorans (strain LB400)</name>
    <dbReference type="NCBI Taxonomy" id="266265"/>
    <lineage>
        <taxon>Bacteria</taxon>
        <taxon>Pseudomonadati</taxon>
        <taxon>Pseudomonadota</taxon>
        <taxon>Betaproteobacteria</taxon>
        <taxon>Burkholderiales</taxon>
        <taxon>Burkholderiaceae</taxon>
        <taxon>Paraburkholderia</taxon>
    </lineage>
</organism>